<organism>
    <name type="scientific">Streptococcus pneumoniae (strain ATCC BAA-255 / R6)</name>
    <dbReference type="NCBI Taxonomy" id="171101"/>
    <lineage>
        <taxon>Bacteria</taxon>
        <taxon>Bacillati</taxon>
        <taxon>Bacillota</taxon>
        <taxon>Bacilli</taxon>
        <taxon>Lactobacillales</taxon>
        <taxon>Streptococcaceae</taxon>
        <taxon>Streptococcus</taxon>
    </lineage>
</organism>
<sequence>MSSGKIAQVIGPVVDVLFAAGEKLPEINNALVVYKNDERKTKIVLEVALELGDGMVRTIAMESTDGLTRGMEVLDTGRPISVPVGKETLGRVFNVLGDTIDLEAPFTEDAERQPIHKKAPTFDELSTSSEILETGIKVIDLLAPYLKGGKVGLFGGAGVGKTVLIQELIHNIAQEHGGISVFAGVGERTREGNDLYWEMKESGVIEKTAMVFGQMNEPPGARMRVALTGLTIAEYFRDVEGQDVLLFIDNIFRFTQAGSEVSALLGRMPSAVGYQPTLATEMGQLQERITSTKKGSVTSIQAIYVPADDYTDPAPATAFAHLDSTTNLERKLVQLGIYPAVDPLASSSRALAPEIVGEEHYAVAAEVKRVLQRYHELQDIIAILGMDELSDEEKTLVARARRIQFFLSQNFNVAEQFTGQPGSYVPVAETVRGFKEILDGKYDHLPEDAFRGVGSIEDVIAKAEKMGF</sequence>
<reference key="1">
    <citation type="journal article" date="2001" name="Mol. Microbiol.">
        <title>The promoter of the operon encoding the F0F1 ATPase of Streptococcus pneumoniae is inducible by pH.</title>
        <authorList>
            <person name="Martin-Galiano A.J."/>
            <person name="Ferrandiz M.J."/>
            <person name="de la Campa A.G."/>
        </authorList>
    </citation>
    <scope>NUCLEOTIDE SEQUENCE [GENOMIC DNA]</scope>
    <scope>SUBUNIT</scope>
    <scope>SUBCELLULAR LOCATION</scope>
    <scope>INDUCTION</scope>
</reference>
<reference key="2">
    <citation type="journal article" date="2001" name="J. Bacteriol.">
        <title>Genome of the bacterium Streptococcus pneumoniae strain R6.</title>
        <authorList>
            <person name="Hoskins J."/>
            <person name="Alborn W.E. Jr."/>
            <person name="Arnold J."/>
            <person name="Blaszczak L.C."/>
            <person name="Burgett S."/>
            <person name="DeHoff B.S."/>
            <person name="Estrem S.T."/>
            <person name="Fritz L."/>
            <person name="Fu D.-J."/>
            <person name="Fuller W."/>
            <person name="Geringer C."/>
            <person name="Gilmour R."/>
            <person name="Glass J.S."/>
            <person name="Khoja H."/>
            <person name="Kraft A.R."/>
            <person name="Lagace R.E."/>
            <person name="LeBlanc D.J."/>
            <person name="Lee L.N."/>
            <person name="Lefkowitz E.J."/>
            <person name="Lu J."/>
            <person name="Matsushima P."/>
            <person name="McAhren S.M."/>
            <person name="McHenney M."/>
            <person name="McLeaster K."/>
            <person name="Mundy C.W."/>
            <person name="Nicas T.I."/>
            <person name="Norris F.H."/>
            <person name="O'Gara M."/>
            <person name="Peery R.B."/>
            <person name="Robertson G.T."/>
            <person name="Rockey P."/>
            <person name="Sun P.-M."/>
            <person name="Winkler M.E."/>
            <person name="Yang Y."/>
            <person name="Young-Bellido M."/>
            <person name="Zhao G."/>
            <person name="Zook C.A."/>
            <person name="Baltz R.H."/>
            <person name="Jaskunas S.R."/>
            <person name="Rosteck P.R. Jr."/>
            <person name="Skatrud P.L."/>
            <person name="Glass J.I."/>
        </authorList>
    </citation>
    <scope>NUCLEOTIDE SEQUENCE [LARGE SCALE GENOMIC DNA]</scope>
    <source>
        <strain>ATCC BAA-255 / R6</strain>
    </source>
</reference>
<comment type="function">
    <text evidence="1">Produces ATP from ADP in the presence of a proton gradient across the membrane. The catalytic sites are hosted primarily by the beta subunits.</text>
</comment>
<comment type="catalytic activity">
    <reaction evidence="1">
        <text>ATP + H2O + 4 H(+)(in) = ADP + phosphate + 5 H(+)(out)</text>
        <dbReference type="Rhea" id="RHEA:57720"/>
        <dbReference type="ChEBI" id="CHEBI:15377"/>
        <dbReference type="ChEBI" id="CHEBI:15378"/>
        <dbReference type="ChEBI" id="CHEBI:30616"/>
        <dbReference type="ChEBI" id="CHEBI:43474"/>
        <dbReference type="ChEBI" id="CHEBI:456216"/>
        <dbReference type="EC" id="7.1.2.2"/>
    </reaction>
</comment>
<comment type="subunit">
    <text evidence="1 2">F-type ATPases have 2 components, CF(1) - the catalytic core - and CF(0) - the membrane proton channel. CF(1) has five subunits: alpha(3), beta(3), gamma(1), delta(1), epsilon(1). CF(0) has three main subunits: a(1), b(2) and c(9-12). The alpha and beta chains form an alternating ring which encloses part of the gamma chain. CF(1) is attached to CF(0) by a central stalk formed by the gamma and epsilon chains, while a peripheral stalk is formed by the delta and b chains.</text>
</comment>
<comment type="subcellular location">
    <subcellularLocation>
        <location evidence="4">Cell membrane</location>
        <topology evidence="4">Peripheral membrane protein</topology>
    </subcellularLocation>
</comment>
<comment type="induction">
    <text evidence="2">Induced by a decrease in external pH from 7.5 to 5.7.</text>
</comment>
<comment type="similarity">
    <text evidence="1">Belongs to the ATPase alpha/beta chains family.</text>
</comment>
<feature type="chain" id="PRO_0000254390" description="ATP synthase subunit beta">
    <location>
        <begin position="1"/>
        <end position="468"/>
    </location>
</feature>
<feature type="binding site" evidence="1">
    <location>
        <begin position="155"/>
        <end position="162"/>
    </location>
    <ligand>
        <name>ATP</name>
        <dbReference type="ChEBI" id="CHEBI:30616"/>
    </ligand>
</feature>
<feature type="sequence conflict" description="In Ref. 1; AAL66415." evidence="3" ref="1">
    <original>D</original>
    <variation>N</variation>
    <location>
        <position position="323"/>
    </location>
</feature>
<protein>
    <recommendedName>
        <fullName evidence="1">ATP synthase subunit beta</fullName>
        <ecNumber evidence="1">7.1.2.2</ecNumber>
    </recommendedName>
    <alternativeName>
        <fullName evidence="1">ATP synthase F1 sector subunit beta</fullName>
    </alternativeName>
    <alternativeName>
        <fullName evidence="1">F-ATPase subunit beta</fullName>
    </alternativeName>
</protein>
<keyword id="KW-0066">ATP synthesis</keyword>
<keyword id="KW-0067">ATP-binding</keyword>
<keyword id="KW-1003">Cell membrane</keyword>
<keyword id="KW-0139">CF(1)</keyword>
<keyword id="KW-0375">Hydrogen ion transport</keyword>
<keyword id="KW-0406">Ion transport</keyword>
<keyword id="KW-0472">Membrane</keyword>
<keyword id="KW-0547">Nucleotide-binding</keyword>
<keyword id="KW-1185">Reference proteome</keyword>
<keyword id="KW-1278">Translocase</keyword>
<keyword id="KW-0813">Transport</keyword>
<evidence type="ECO:0000255" key="1">
    <source>
        <dbReference type="HAMAP-Rule" id="MF_01347"/>
    </source>
</evidence>
<evidence type="ECO:0000269" key="2">
    <source>
    </source>
</evidence>
<evidence type="ECO:0000305" key="3"/>
<evidence type="ECO:0000305" key="4">
    <source>
    </source>
</evidence>
<accession>Q8DP44</accession>
<accession>Q8VSS0</accession>
<dbReference type="EC" id="7.1.2.2" evidence="1"/>
<dbReference type="EMBL" id="AF368465">
    <property type="protein sequence ID" value="AAL66415.1"/>
    <property type="molecule type" value="Genomic_DNA"/>
</dbReference>
<dbReference type="EMBL" id="AE007317">
    <property type="protein sequence ID" value="AAL00164.1"/>
    <property type="molecule type" value="Genomic_DNA"/>
</dbReference>
<dbReference type="PIR" id="F95175">
    <property type="entry name" value="F95175"/>
</dbReference>
<dbReference type="PIR" id="G98041">
    <property type="entry name" value="G98041"/>
</dbReference>
<dbReference type="RefSeq" id="NP_358953.1">
    <property type="nucleotide sequence ID" value="NC_003098.1"/>
</dbReference>
<dbReference type="RefSeq" id="WP_000094354.1">
    <property type="nucleotide sequence ID" value="NC_003098.1"/>
</dbReference>
<dbReference type="SMR" id="Q8DP44"/>
<dbReference type="STRING" id="171101.spr1360"/>
<dbReference type="KEGG" id="spr:spr1360"/>
<dbReference type="PATRIC" id="fig|171101.6.peg.1474"/>
<dbReference type="eggNOG" id="COG0055">
    <property type="taxonomic scope" value="Bacteria"/>
</dbReference>
<dbReference type="HOGENOM" id="CLU_022398_0_2_9"/>
<dbReference type="Proteomes" id="UP000000586">
    <property type="component" value="Chromosome"/>
</dbReference>
<dbReference type="GO" id="GO:0005886">
    <property type="term" value="C:plasma membrane"/>
    <property type="evidence" value="ECO:0007669"/>
    <property type="project" value="UniProtKB-SubCell"/>
</dbReference>
<dbReference type="GO" id="GO:0045259">
    <property type="term" value="C:proton-transporting ATP synthase complex"/>
    <property type="evidence" value="ECO:0007669"/>
    <property type="project" value="UniProtKB-KW"/>
</dbReference>
<dbReference type="GO" id="GO:0005524">
    <property type="term" value="F:ATP binding"/>
    <property type="evidence" value="ECO:0007669"/>
    <property type="project" value="UniProtKB-UniRule"/>
</dbReference>
<dbReference type="GO" id="GO:0016887">
    <property type="term" value="F:ATP hydrolysis activity"/>
    <property type="evidence" value="ECO:0007669"/>
    <property type="project" value="InterPro"/>
</dbReference>
<dbReference type="GO" id="GO:0046933">
    <property type="term" value="F:proton-transporting ATP synthase activity, rotational mechanism"/>
    <property type="evidence" value="ECO:0007669"/>
    <property type="project" value="UniProtKB-UniRule"/>
</dbReference>
<dbReference type="CDD" id="cd18110">
    <property type="entry name" value="ATP-synt_F1_beta_C"/>
    <property type="match status" value="1"/>
</dbReference>
<dbReference type="CDD" id="cd18115">
    <property type="entry name" value="ATP-synt_F1_beta_N"/>
    <property type="match status" value="1"/>
</dbReference>
<dbReference type="CDD" id="cd01133">
    <property type="entry name" value="F1-ATPase_beta_CD"/>
    <property type="match status" value="1"/>
</dbReference>
<dbReference type="FunFam" id="1.10.1140.10:FF:000001">
    <property type="entry name" value="ATP synthase subunit beta"/>
    <property type="match status" value="1"/>
</dbReference>
<dbReference type="FunFam" id="2.40.10.170:FF:000005">
    <property type="entry name" value="ATP synthase subunit beta"/>
    <property type="match status" value="1"/>
</dbReference>
<dbReference type="FunFam" id="3.40.50.300:FF:000004">
    <property type="entry name" value="ATP synthase subunit beta"/>
    <property type="match status" value="1"/>
</dbReference>
<dbReference type="Gene3D" id="2.40.10.170">
    <property type="match status" value="1"/>
</dbReference>
<dbReference type="Gene3D" id="1.10.1140.10">
    <property type="entry name" value="Bovine Mitochondrial F1-atpase, Atp Synthase Beta Chain, Chain D, domain 3"/>
    <property type="match status" value="1"/>
</dbReference>
<dbReference type="Gene3D" id="3.40.50.300">
    <property type="entry name" value="P-loop containing nucleotide triphosphate hydrolases"/>
    <property type="match status" value="1"/>
</dbReference>
<dbReference type="HAMAP" id="MF_01347">
    <property type="entry name" value="ATP_synth_beta_bact"/>
    <property type="match status" value="1"/>
</dbReference>
<dbReference type="InterPro" id="IPR003593">
    <property type="entry name" value="AAA+_ATPase"/>
</dbReference>
<dbReference type="InterPro" id="IPR055190">
    <property type="entry name" value="ATP-synt_VA_C"/>
</dbReference>
<dbReference type="InterPro" id="IPR005722">
    <property type="entry name" value="ATP_synth_F1_bsu"/>
</dbReference>
<dbReference type="InterPro" id="IPR020003">
    <property type="entry name" value="ATPase_a/bsu_AS"/>
</dbReference>
<dbReference type="InterPro" id="IPR050053">
    <property type="entry name" value="ATPase_alpha/beta_chains"/>
</dbReference>
<dbReference type="InterPro" id="IPR004100">
    <property type="entry name" value="ATPase_F1/V1/A1_a/bsu_N"/>
</dbReference>
<dbReference type="InterPro" id="IPR036121">
    <property type="entry name" value="ATPase_F1/V1/A1_a/bsu_N_sf"/>
</dbReference>
<dbReference type="InterPro" id="IPR000194">
    <property type="entry name" value="ATPase_F1/V1/A1_a/bsu_nucl-bd"/>
</dbReference>
<dbReference type="InterPro" id="IPR024034">
    <property type="entry name" value="ATPase_F1/V1_b/a_C"/>
</dbReference>
<dbReference type="InterPro" id="IPR027417">
    <property type="entry name" value="P-loop_NTPase"/>
</dbReference>
<dbReference type="NCBIfam" id="TIGR01039">
    <property type="entry name" value="atpD"/>
    <property type="match status" value="1"/>
</dbReference>
<dbReference type="PANTHER" id="PTHR15184">
    <property type="entry name" value="ATP SYNTHASE"/>
    <property type="match status" value="1"/>
</dbReference>
<dbReference type="PANTHER" id="PTHR15184:SF71">
    <property type="entry name" value="ATP SYNTHASE SUBUNIT BETA, MITOCHONDRIAL"/>
    <property type="match status" value="1"/>
</dbReference>
<dbReference type="Pfam" id="PF00006">
    <property type="entry name" value="ATP-synt_ab"/>
    <property type="match status" value="1"/>
</dbReference>
<dbReference type="Pfam" id="PF02874">
    <property type="entry name" value="ATP-synt_ab_N"/>
    <property type="match status" value="1"/>
</dbReference>
<dbReference type="Pfam" id="PF22919">
    <property type="entry name" value="ATP-synt_VA_C"/>
    <property type="match status" value="1"/>
</dbReference>
<dbReference type="SMART" id="SM00382">
    <property type="entry name" value="AAA"/>
    <property type="match status" value="1"/>
</dbReference>
<dbReference type="SUPFAM" id="SSF47917">
    <property type="entry name" value="C-terminal domain of alpha and beta subunits of F1 ATP synthase"/>
    <property type="match status" value="1"/>
</dbReference>
<dbReference type="SUPFAM" id="SSF50615">
    <property type="entry name" value="N-terminal domain of alpha and beta subunits of F1 ATP synthase"/>
    <property type="match status" value="1"/>
</dbReference>
<dbReference type="SUPFAM" id="SSF52540">
    <property type="entry name" value="P-loop containing nucleoside triphosphate hydrolases"/>
    <property type="match status" value="1"/>
</dbReference>
<dbReference type="PROSITE" id="PS00152">
    <property type="entry name" value="ATPASE_ALPHA_BETA"/>
    <property type="match status" value="1"/>
</dbReference>
<gene>
    <name evidence="1" type="primary">atpD</name>
    <name type="ordered locus">spr1360</name>
</gene>
<proteinExistence type="evidence at protein level"/>
<name>ATPB_STRR6</name>